<protein>
    <recommendedName>
        <fullName>Lincomycin biosynthesis protein LmbN</fullName>
    </recommendedName>
</protein>
<organism>
    <name type="scientific">Streptomyces lincolnensis</name>
    <dbReference type="NCBI Taxonomy" id="1915"/>
    <lineage>
        <taxon>Bacteria</taxon>
        <taxon>Bacillati</taxon>
        <taxon>Actinomycetota</taxon>
        <taxon>Actinomycetes</taxon>
        <taxon>Kitasatosporales</taxon>
        <taxon>Streptomycetaceae</taxon>
        <taxon>Streptomyces</taxon>
    </lineage>
</organism>
<evidence type="ECO:0000255" key="1">
    <source>
        <dbReference type="PROSITE-ProRule" id="PRU00258"/>
    </source>
</evidence>
<evidence type="ECO:0000255" key="2">
    <source>
        <dbReference type="PROSITE-ProRule" id="PRU00797"/>
    </source>
</evidence>
<keyword id="KW-0045">Antibiotic biosynthesis</keyword>
<keyword id="KW-0596">Phosphopantetheine</keyword>
<keyword id="KW-0597">Phosphoprotein</keyword>
<dbReference type="EMBL" id="X79146">
    <property type="protein sequence ID" value="CAA55760.1"/>
    <property type="molecule type" value="Genomic_DNA"/>
</dbReference>
<dbReference type="PIR" id="S69822">
    <property type="entry name" value="S44961"/>
</dbReference>
<dbReference type="SMR" id="Q54367"/>
<dbReference type="STRING" id="1915.SLINC_0246"/>
<dbReference type="UniPathway" id="UPA00161"/>
<dbReference type="GO" id="GO:0097367">
    <property type="term" value="F:carbohydrate derivative binding"/>
    <property type="evidence" value="ECO:0007669"/>
    <property type="project" value="InterPro"/>
</dbReference>
<dbReference type="GO" id="GO:0017000">
    <property type="term" value="P:antibiotic biosynthetic process"/>
    <property type="evidence" value="ECO:0007669"/>
    <property type="project" value="UniProtKB-KW"/>
</dbReference>
<dbReference type="GO" id="GO:1901135">
    <property type="term" value="P:carbohydrate derivative metabolic process"/>
    <property type="evidence" value="ECO:0007669"/>
    <property type="project" value="InterPro"/>
</dbReference>
<dbReference type="CDD" id="cd05006">
    <property type="entry name" value="SIS_GmhA"/>
    <property type="match status" value="1"/>
</dbReference>
<dbReference type="Gene3D" id="1.10.1200.10">
    <property type="entry name" value="ACP-like"/>
    <property type="match status" value="1"/>
</dbReference>
<dbReference type="Gene3D" id="3.40.50.10490">
    <property type="entry name" value="Glucose-6-phosphate isomerase like protein, domain 1"/>
    <property type="match status" value="1"/>
</dbReference>
<dbReference type="InterPro" id="IPR036736">
    <property type="entry name" value="ACP-like_sf"/>
</dbReference>
<dbReference type="InterPro" id="IPR035461">
    <property type="entry name" value="GmhA/DiaA"/>
</dbReference>
<dbReference type="InterPro" id="IPR009081">
    <property type="entry name" value="PP-bd_ACP"/>
</dbReference>
<dbReference type="InterPro" id="IPR001347">
    <property type="entry name" value="SIS_dom"/>
</dbReference>
<dbReference type="InterPro" id="IPR046348">
    <property type="entry name" value="SIS_dom_sf"/>
</dbReference>
<dbReference type="InterPro" id="IPR050099">
    <property type="entry name" value="SIS_GmhA/DiaA_subfam"/>
</dbReference>
<dbReference type="PANTHER" id="PTHR30390">
    <property type="entry name" value="SEDOHEPTULOSE 7-PHOSPHATE ISOMERASE / DNAA INITIATOR-ASSOCIATING FACTOR FOR REPLICATION INITIATION"/>
    <property type="match status" value="1"/>
</dbReference>
<dbReference type="PANTHER" id="PTHR30390:SF8">
    <property type="entry name" value="SUGAR ISOMERASE (SIS)"/>
    <property type="match status" value="1"/>
</dbReference>
<dbReference type="Pfam" id="PF13580">
    <property type="entry name" value="SIS_2"/>
    <property type="match status" value="1"/>
</dbReference>
<dbReference type="SUPFAM" id="SSF47336">
    <property type="entry name" value="ACP-like"/>
    <property type="match status" value="1"/>
</dbReference>
<dbReference type="SUPFAM" id="SSF53697">
    <property type="entry name" value="SIS domain"/>
    <property type="match status" value="1"/>
</dbReference>
<dbReference type="PROSITE" id="PS50075">
    <property type="entry name" value="CARRIER"/>
    <property type="match status" value="1"/>
</dbReference>
<dbReference type="PROSITE" id="PS51464">
    <property type="entry name" value="SIS"/>
    <property type="match status" value="1"/>
</dbReference>
<comment type="pathway">
    <text>Antibiotic biosynthesis; lincomycin biosynthesis.</text>
</comment>
<reference key="1">
    <citation type="journal article" date="1995" name="Mol. Microbiol.">
        <title>Molecular characterization of the lincomycin-production gene cluster of Streptomyces lincolnensis 78-11.</title>
        <authorList>
            <person name="Peschke U."/>
            <person name="Schmidt H."/>
            <person name="Zhang H.Z."/>
            <person name="Piepersberg W."/>
        </authorList>
    </citation>
    <scope>NUCLEOTIDE SEQUENCE [GENOMIC DNA]</scope>
    <source>
        <strain>78-11</strain>
    </source>
</reference>
<name>LMBN_STRLN</name>
<accession>Q54367</accession>
<sequence>MSTLDEVLALLRTIAPSGDETELTADTLLFSSGLLDSLALEELHVAIEERWAPIPPMELARANFDTPAAIAATVARITHEETPVSVVRNLLSDSGRLTADLAPDAMGAGAQLLFDTWHAGGTTLSCGNGGSASTASHFAADLAKLTIVPGQRRMRTLCLNDNASAFSAWTNDEGFPVVYREQAEPWLEPTATLVAFSVHGGSRGGEVSANLPAVARLAKERGAAVVAVTGFDGGALGDLADVHINIPHATEPVATPLIESLHVLVHHALCVAHAP</sequence>
<gene>
    <name type="primary">lmbN</name>
</gene>
<feature type="chain" id="PRO_0000136592" description="Lincomycin biosynthesis protein LmbN">
    <location>
        <begin position="1"/>
        <end position="275"/>
    </location>
</feature>
<feature type="domain" description="Carrier" evidence="1">
    <location>
        <begin position="1"/>
        <end position="78"/>
    </location>
</feature>
<feature type="domain" description="SIS" evidence="2">
    <location>
        <begin position="113"/>
        <end position="275"/>
    </location>
</feature>
<feature type="modified residue" description="O-(pantetheine 4'-phosphoryl)serine" evidence="1">
    <location>
        <position position="37"/>
    </location>
</feature>
<proteinExistence type="inferred from homology"/>